<feature type="transit peptide" description="Mitochondrion" evidence="1">
    <location>
        <begin position="1"/>
        <end position="33"/>
    </location>
</feature>
<feature type="chain" id="PRO_0000251825" description="NADH dehydrogenase [ubiquinone] 1 beta subcomplex subunit 2, mitochondrial">
    <location>
        <begin position="34"/>
        <end position="105"/>
    </location>
</feature>
<feature type="region of interest" description="Disordered" evidence="3">
    <location>
        <begin position="85"/>
        <end position="105"/>
    </location>
</feature>
<feature type="compositionally biased region" description="Acidic residues" evidence="3">
    <location>
        <begin position="93"/>
        <end position="105"/>
    </location>
</feature>
<accession>Q0MQC8</accession>
<reference key="1">
    <citation type="journal article" date="2006" name="Gene">
        <title>Adaptive selection of mitochondrial complex I subunits during primate radiation.</title>
        <authorList>
            <person name="Mishmar D."/>
            <person name="Ruiz-Pesini E."/>
            <person name="Mondragon-Palomino M."/>
            <person name="Procaccio V."/>
            <person name="Gaut B."/>
            <person name="Wallace D.C."/>
        </authorList>
    </citation>
    <scope>NUCLEOTIDE SEQUENCE [MRNA]</scope>
</reference>
<proteinExistence type="inferred from homology"/>
<name>NDUB2_GORGO</name>
<sequence>MSALTRLASFARVGGRLFRSGRARTAGDGGVRHAGGGVHIEPRYRQFPQLTRSQVFQSEFFSGLMWFWILWRFWHDSEEVLGHFPYPDPSQWTDEELGIPPDDED</sequence>
<organism>
    <name type="scientific">Gorilla gorilla gorilla</name>
    <name type="common">Western lowland gorilla</name>
    <dbReference type="NCBI Taxonomy" id="9595"/>
    <lineage>
        <taxon>Eukaryota</taxon>
        <taxon>Metazoa</taxon>
        <taxon>Chordata</taxon>
        <taxon>Craniata</taxon>
        <taxon>Vertebrata</taxon>
        <taxon>Euteleostomi</taxon>
        <taxon>Mammalia</taxon>
        <taxon>Eutheria</taxon>
        <taxon>Euarchontoglires</taxon>
        <taxon>Primates</taxon>
        <taxon>Haplorrhini</taxon>
        <taxon>Catarrhini</taxon>
        <taxon>Hominidae</taxon>
        <taxon>Gorilla</taxon>
    </lineage>
</organism>
<protein>
    <recommendedName>
        <fullName>NADH dehydrogenase [ubiquinone] 1 beta subcomplex subunit 2, mitochondrial</fullName>
    </recommendedName>
    <alternativeName>
        <fullName>Complex I-AGGG</fullName>
        <shortName>CI-AGGG</shortName>
    </alternativeName>
    <alternativeName>
        <fullName>NADH-ubiquinone oxidoreductase AGGG subunit</fullName>
    </alternativeName>
</protein>
<comment type="function">
    <text evidence="2">Accessory subunit of the mitochondrial membrane respiratory chain NADH dehydrogenase (Complex I), that is believed not to be involved in catalysis. Complex I functions in the transfer of electrons from NADH to the respiratory chain. The immediate electron acceptor for the enzyme is believed to be ubiquinone.</text>
</comment>
<comment type="subunit">
    <text evidence="2">Complex I is composed of 45 different subunits.</text>
</comment>
<comment type="subcellular location">
    <subcellularLocation>
        <location evidence="2">Mitochondrion inner membrane</location>
        <topology evidence="2">Peripheral membrane protein</topology>
        <orientation evidence="2">Matrix side</orientation>
    </subcellularLocation>
</comment>
<comment type="similarity">
    <text evidence="4">Belongs to the complex I NDUFB2 subunit family.</text>
</comment>
<dbReference type="EMBL" id="DQ885706">
    <property type="protein sequence ID" value="ABH12215.1"/>
    <property type="molecule type" value="mRNA"/>
</dbReference>
<dbReference type="RefSeq" id="XP_018875738.1">
    <property type="nucleotide sequence ID" value="XM_019020193.1"/>
</dbReference>
<dbReference type="RefSeq" id="XP_030869380.1">
    <property type="nucleotide sequence ID" value="XM_031013520.3"/>
</dbReference>
<dbReference type="RefSeq" id="XP_055202397.1">
    <property type="nucleotide sequence ID" value="XM_055346422.2"/>
</dbReference>
<dbReference type="SMR" id="Q0MQC8"/>
<dbReference type="FunCoup" id="Q0MQC8">
    <property type="interactions" value="472"/>
</dbReference>
<dbReference type="STRING" id="9593.ENSGGOP00000031652"/>
<dbReference type="GeneID" id="109025103"/>
<dbReference type="InParanoid" id="Q0MQC8"/>
<dbReference type="Proteomes" id="UP000001519">
    <property type="component" value="Unplaced"/>
</dbReference>
<dbReference type="GO" id="GO:0005743">
    <property type="term" value="C:mitochondrial inner membrane"/>
    <property type="evidence" value="ECO:0007669"/>
    <property type="project" value="UniProtKB-SubCell"/>
</dbReference>
<dbReference type="GO" id="GO:0045271">
    <property type="term" value="C:respiratory chain complex I"/>
    <property type="evidence" value="ECO:0000250"/>
    <property type="project" value="UniProtKB"/>
</dbReference>
<dbReference type="GO" id="GO:0032981">
    <property type="term" value="P:mitochondrial respiratory chain complex I assembly"/>
    <property type="evidence" value="ECO:0000318"/>
    <property type="project" value="GO_Central"/>
</dbReference>
<dbReference type="InterPro" id="IPR026627">
    <property type="entry name" value="NDUFB2_animal"/>
</dbReference>
<dbReference type="PANTHER" id="PTHR15223:SF1">
    <property type="entry name" value="NADH DEHYDROGENASE [UBIQUINONE] 1 BETA SUBCOMPLEX SUBUNIT 2, MITOCHONDRIAL"/>
    <property type="match status" value="1"/>
</dbReference>
<dbReference type="PANTHER" id="PTHR15223">
    <property type="entry name" value="NADH-UBIQUINONE OXIDOREDUCTASE AGGG SUBUNIT"/>
    <property type="match status" value="1"/>
</dbReference>
<dbReference type="Pfam" id="PF14813">
    <property type="entry name" value="NADH_B2"/>
    <property type="match status" value="1"/>
</dbReference>
<gene>
    <name type="primary">NDUFB2</name>
</gene>
<evidence type="ECO:0000250" key="1"/>
<evidence type="ECO:0000250" key="2">
    <source>
        <dbReference type="UniProtKB" id="O95178"/>
    </source>
</evidence>
<evidence type="ECO:0000256" key="3">
    <source>
        <dbReference type="SAM" id="MobiDB-lite"/>
    </source>
</evidence>
<evidence type="ECO:0000305" key="4"/>
<keyword id="KW-0249">Electron transport</keyword>
<keyword id="KW-0472">Membrane</keyword>
<keyword id="KW-0496">Mitochondrion</keyword>
<keyword id="KW-0999">Mitochondrion inner membrane</keyword>
<keyword id="KW-1185">Reference proteome</keyword>
<keyword id="KW-0679">Respiratory chain</keyword>
<keyword id="KW-0809">Transit peptide</keyword>
<keyword id="KW-0813">Transport</keyword>